<comment type="function">
    <text evidence="1">Cell division inhibitor that blocks the formation of polar Z ring septums. Rapidly oscillates between the poles of the cell to destabilize FtsZ filaments that have formed before they mature into polar Z rings. Prevents FtsZ polymerization.</text>
</comment>
<comment type="subunit">
    <text evidence="1">Interacts with MinD and FtsZ.</text>
</comment>
<comment type="similarity">
    <text evidence="1">Belongs to the MinC family.</text>
</comment>
<protein>
    <recommendedName>
        <fullName evidence="1">Probable septum site-determining protein MinC</fullName>
    </recommendedName>
</protein>
<reference key="1">
    <citation type="journal article" date="2003" name="J. Bacteriol.">
        <title>Comparative analyses of the complete genome sequences of Pierce's disease and citrus variegated chlorosis strains of Xylella fastidiosa.</title>
        <authorList>
            <person name="Van Sluys M.A."/>
            <person name="de Oliveira M.C."/>
            <person name="Monteiro-Vitorello C.B."/>
            <person name="Miyaki C.Y."/>
            <person name="Furlan L.R."/>
            <person name="Camargo L.E.A."/>
            <person name="da Silva A.C.R."/>
            <person name="Moon D.H."/>
            <person name="Takita M.A."/>
            <person name="Lemos E.G.M."/>
            <person name="Machado M.A."/>
            <person name="Ferro M.I.T."/>
            <person name="da Silva F.R."/>
            <person name="Goldman M.H.S."/>
            <person name="Goldman G.H."/>
            <person name="Lemos M.V.F."/>
            <person name="El-Dorry H."/>
            <person name="Tsai S.M."/>
            <person name="Carrer H."/>
            <person name="Carraro D.M."/>
            <person name="de Oliveira R.C."/>
            <person name="Nunes L.R."/>
            <person name="Siqueira W.J."/>
            <person name="Coutinho L.L."/>
            <person name="Kimura E.T."/>
            <person name="Ferro E.S."/>
            <person name="Harakava R."/>
            <person name="Kuramae E.E."/>
            <person name="Marino C.L."/>
            <person name="Giglioti E."/>
            <person name="Abreu I.L."/>
            <person name="Alves L.M.C."/>
            <person name="do Amaral A.M."/>
            <person name="Baia G.S."/>
            <person name="Blanco S.R."/>
            <person name="Brito M.S."/>
            <person name="Cannavan F.S."/>
            <person name="Celestino A.V."/>
            <person name="da Cunha A.F."/>
            <person name="Fenille R.C."/>
            <person name="Ferro J.A."/>
            <person name="Formighieri E.F."/>
            <person name="Kishi L.T."/>
            <person name="Leoni S.G."/>
            <person name="Oliveira A.R."/>
            <person name="Rosa V.E. Jr."/>
            <person name="Sassaki F.T."/>
            <person name="Sena J.A.D."/>
            <person name="de Souza A.A."/>
            <person name="Truffi D."/>
            <person name="Tsukumo F."/>
            <person name="Yanai G.M."/>
            <person name="Zaros L.G."/>
            <person name="Civerolo E.L."/>
            <person name="Simpson A.J.G."/>
            <person name="Almeida N.F. Jr."/>
            <person name="Setubal J.C."/>
            <person name="Kitajima J.P."/>
        </authorList>
    </citation>
    <scope>NUCLEOTIDE SEQUENCE [LARGE SCALE GENOMIC DNA]</scope>
    <source>
        <strain>Temecula1 / ATCC 700964</strain>
    </source>
</reference>
<name>MINC_XYLFT</name>
<organism>
    <name type="scientific">Xylella fastidiosa (strain Temecula1 / ATCC 700964)</name>
    <dbReference type="NCBI Taxonomy" id="183190"/>
    <lineage>
        <taxon>Bacteria</taxon>
        <taxon>Pseudomonadati</taxon>
        <taxon>Pseudomonadota</taxon>
        <taxon>Gammaproteobacteria</taxon>
        <taxon>Lysobacterales</taxon>
        <taxon>Lysobacteraceae</taxon>
        <taxon>Xylella</taxon>
    </lineage>
</organism>
<dbReference type="EMBL" id="AE009442">
    <property type="protein sequence ID" value="AAO28441.1"/>
    <property type="molecule type" value="Genomic_DNA"/>
</dbReference>
<dbReference type="RefSeq" id="WP_004090597.1">
    <property type="nucleotide sequence ID" value="NC_004556.1"/>
</dbReference>
<dbReference type="SMR" id="Q87DW2"/>
<dbReference type="GeneID" id="93904283"/>
<dbReference type="KEGG" id="xft:PD_0568"/>
<dbReference type="HOGENOM" id="CLU_067812_0_1_6"/>
<dbReference type="Proteomes" id="UP000002516">
    <property type="component" value="Chromosome"/>
</dbReference>
<dbReference type="GO" id="GO:0000902">
    <property type="term" value="P:cell morphogenesis"/>
    <property type="evidence" value="ECO:0007669"/>
    <property type="project" value="InterPro"/>
</dbReference>
<dbReference type="GO" id="GO:0000917">
    <property type="term" value="P:division septum assembly"/>
    <property type="evidence" value="ECO:0007669"/>
    <property type="project" value="UniProtKB-KW"/>
</dbReference>
<dbReference type="GO" id="GO:0051302">
    <property type="term" value="P:regulation of cell division"/>
    <property type="evidence" value="ECO:0007669"/>
    <property type="project" value="InterPro"/>
</dbReference>
<dbReference type="GO" id="GO:1901891">
    <property type="term" value="P:regulation of cell septum assembly"/>
    <property type="evidence" value="ECO:0007669"/>
    <property type="project" value="InterPro"/>
</dbReference>
<dbReference type="Gene3D" id="2.160.20.70">
    <property type="match status" value="1"/>
</dbReference>
<dbReference type="Gene3D" id="3.30.70.260">
    <property type="match status" value="1"/>
</dbReference>
<dbReference type="HAMAP" id="MF_00267">
    <property type="entry name" value="MinC"/>
    <property type="match status" value="1"/>
</dbReference>
<dbReference type="InterPro" id="IPR016098">
    <property type="entry name" value="CAP/MinC_C"/>
</dbReference>
<dbReference type="InterPro" id="IPR013033">
    <property type="entry name" value="MinC"/>
</dbReference>
<dbReference type="InterPro" id="IPR036145">
    <property type="entry name" value="MinC_C_sf"/>
</dbReference>
<dbReference type="InterPro" id="IPR007874">
    <property type="entry name" value="MinC_N"/>
</dbReference>
<dbReference type="InterPro" id="IPR005526">
    <property type="entry name" value="Septum_form_inhib_MinC_C"/>
</dbReference>
<dbReference type="NCBIfam" id="TIGR01222">
    <property type="entry name" value="minC"/>
    <property type="match status" value="1"/>
</dbReference>
<dbReference type="PANTHER" id="PTHR34108">
    <property type="entry name" value="SEPTUM SITE-DETERMINING PROTEIN MINC"/>
    <property type="match status" value="1"/>
</dbReference>
<dbReference type="PANTHER" id="PTHR34108:SF1">
    <property type="entry name" value="SEPTUM SITE-DETERMINING PROTEIN MINC"/>
    <property type="match status" value="1"/>
</dbReference>
<dbReference type="Pfam" id="PF03775">
    <property type="entry name" value="MinC_C"/>
    <property type="match status" value="1"/>
</dbReference>
<dbReference type="Pfam" id="PF05209">
    <property type="entry name" value="MinC_N"/>
    <property type="match status" value="1"/>
</dbReference>
<dbReference type="SUPFAM" id="SSF63848">
    <property type="entry name" value="Cell-division inhibitor MinC, C-terminal domain"/>
    <property type="match status" value="1"/>
</dbReference>
<accession>Q87DW2</accession>
<gene>
    <name evidence="1" type="primary">minC</name>
    <name type="ordered locus">PD_0568</name>
</gene>
<feature type="chain" id="PRO_0000189076" description="Probable septum site-determining protein MinC">
    <location>
        <begin position="1"/>
        <end position="238"/>
    </location>
</feature>
<sequence>MSNVNMDFEQAGELKIGQVGIATLRIRTLNVPRLIQEMSDRVTRAPKLFRRTAVILDFGELPHPPDLATAKALVEGLRAANVLPVAIAYGTNEIDLLSQQLGLPLLSKFRAHYERQEVAAPPPQSTPPISTGRIQHTTVRSGQQLYAEHCDLTILNTVGAGAEVIADGNIHIYGTLRGRAMAGARGNAEMRIFCRDFQAELIAIAGRYKVLDDIPTELRGKAVQVWLEQNQIKIAALD</sequence>
<proteinExistence type="inferred from homology"/>
<keyword id="KW-0131">Cell cycle</keyword>
<keyword id="KW-0132">Cell division</keyword>
<keyword id="KW-1185">Reference proteome</keyword>
<keyword id="KW-0717">Septation</keyword>
<evidence type="ECO:0000255" key="1">
    <source>
        <dbReference type="HAMAP-Rule" id="MF_00267"/>
    </source>
</evidence>